<accession>Q21MT5</accession>
<sequence length="424" mass="48650">MSYIIDRRLNSKKKSTVNRQRFLRRYKQHIKKAVSDAIDKRSIQDMDRGEKIGIPSKDISEPVFHHDSGGVDTRVLPGNDQFHSGDRIQRPPSGQGGGGSGKGASDSGEGMDEFVFQITQEEFLNFMFEDLALPNLVKRQLAGIEEFEMRRAGFSNEGSPGKINVVRSLRSANSRRIALTSKKRKQLKELEARIAQLQAEPIADSATELEELEAEAAKLRAKIKRVPWLDTFDLKYNLHVKHPIPHSRAVMFCLMDVSGSMDQATKDVAKRFFLLLFLFLQRNYEKIEVVFIRHHTSAKEVNEEEFFYSRETGGTIVSSALHLMDEIIRERYPPNQWNIYGAQASDGDNWNDDSTTCYKVLTENIMPKVQYFSYIEITPRDHQALWAAYESVLRDFPKSFAMRQLEGADEIYPVFRDLFQKQVA</sequence>
<keyword id="KW-1185">Reference proteome</keyword>
<comment type="similarity">
    <text evidence="1">Belongs to the UPF0229 family.</text>
</comment>
<protein>
    <recommendedName>
        <fullName evidence="1">UPF0229 protein Sde_0732</fullName>
    </recommendedName>
</protein>
<gene>
    <name type="ordered locus">Sde_0732</name>
</gene>
<reference key="1">
    <citation type="journal article" date="2008" name="PLoS Genet.">
        <title>Complete genome sequence of the complex carbohydrate-degrading marine bacterium, Saccharophagus degradans strain 2-40 T.</title>
        <authorList>
            <person name="Weiner R.M."/>
            <person name="Taylor L.E. II"/>
            <person name="Henrissat B."/>
            <person name="Hauser L."/>
            <person name="Land M."/>
            <person name="Coutinho P.M."/>
            <person name="Rancurel C."/>
            <person name="Saunders E.H."/>
            <person name="Longmire A.G."/>
            <person name="Zhang H."/>
            <person name="Bayer E.A."/>
            <person name="Gilbert H.J."/>
            <person name="Larimer F."/>
            <person name="Zhulin I.B."/>
            <person name="Ekborg N.A."/>
            <person name="Lamed R."/>
            <person name="Richardson P.M."/>
            <person name="Borovok I."/>
            <person name="Hutcheson S."/>
        </authorList>
    </citation>
    <scope>NUCLEOTIDE SEQUENCE [LARGE SCALE GENOMIC DNA]</scope>
    <source>
        <strain>2-40 / ATCC 43961 / DSM 17024</strain>
    </source>
</reference>
<name>Y732_SACD2</name>
<evidence type="ECO:0000255" key="1">
    <source>
        <dbReference type="HAMAP-Rule" id="MF_01232"/>
    </source>
</evidence>
<evidence type="ECO:0000256" key="2">
    <source>
        <dbReference type="SAM" id="MobiDB-lite"/>
    </source>
</evidence>
<dbReference type="EMBL" id="CP000282">
    <property type="protein sequence ID" value="ABD79994.1"/>
    <property type="molecule type" value="Genomic_DNA"/>
</dbReference>
<dbReference type="RefSeq" id="WP_011467215.1">
    <property type="nucleotide sequence ID" value="NC_007912.1"/>
</dbReference>
<dbReference type="SMR" id="Q21MT5"/>
<dbReference type="STRING" id="203122.Sde_0732"/>
<dbReference type="GeneID" id="98612417"/>
<dbReference type="KEGG" id="sde:Sde_0732"/>
<dbReference type="eggNOG" id="COG2718">
    <property type="taxonomic scope" value="Bacteria"/>
</dbReference>
<dbReference type="HOGENOM" id="CLU_049702_0_0_6"/>
<dbReference type="OrthoDB" id="9788289at2"/>
<dbReference type="Proteomes" id="UP000001947">
    <property type="component" value="Chromosome"/>
</dbReference>
<dbReference type="HAMAP" id="MF_01232">
    <property type="entry name" value="UPF0229"/>
    <property type="match status" value="1"/>
</dbReference>
<dbReference type="InterPro" id="IPR006698">
    <property type="entry name" value="UPF0229"/>
</dbReference>
<dbReference type="NCBIfam" id="NF003707">
    <property type="entry name" value="PRK05325.1-2"/>
    <property type="match status" value="1"/>
</dbReference>
<dbReference type="NCBIfam" id="NF003708">
    <property type="entry name" value="PRK05325.1-3"/>
    <property type="match status" value="1"/>
</dbReference>
<dbReference type="PANTHER" id="PTHR30510">
    <property type="entry name" value="UPF0229 PROTEIN YEAH"/>
    <property type="match status" value="1"/>
</dbReference>
<dbReference type="PANTHER" id="PTHR30510:SF2">
    <property type="entry name" value="UPF0229 PROTEIN YEAH"/>
    <property type="match status" value="1"/>
</dbReference>
<dbReference type="Pfam" id="PF04285">
    <property type="entry name" value="DUF444"/>
    <property type="match status" value="1"/>
</dbReference>
<proteinExistence type="inferred from homology"/>
<organism>
    <name type="scientific">Saccharophagus degradans (strain 2-40 / ATCC 43961 / DSM 17024)</name>
    <dbReference type="NCBI Taxonomy" id="203122"/>
    <lineage>
        <taxon>Bacteria</taxon>
        <taxon>Pseudomonadati</taxon>
        <taxon>Pseudomonadota</taxon>
        <taxon>Gammaproteobacteria</taxon>
        <taxon>Cellvibrionales</taxon>
        <taxon>Cellvibrionaceae</taxon>
        <taxon>Saccharophagus</taxon>
    </lineage>
</organism>
<feature type="chain" id="PRO_1000066878" description="UPF0229 protein Sde_0732">
    <location>
        <begin position="1"/>
        <end position="424"/>
    </location>
</feature>
<feature type="region of interest" description="Disordered" evidence="2">
    <location>
        <begin position="52"/>
        <end position="109"/>
    </location>
</feature>
<feature type="compositionally biased region" description="Basic and acidic residues" evidence="2">
    <location>
        <begin position="58"/>
        <end position="69"/>
    </location>
</feature>